<feature type="chain" id="PRO_0000113599" description="Serine hydroxymethyltransferase">
    <location>
        <begin position="1"/>
        <end position="413"/>
    </location>
</feature>
<feature type="binding site" evidence="1">
    <location>
        <position position="117"/>
    </location>
    <ligand>
        <name>(6S)-5,6,7,8-tetrahydrofolate</name>
        <dbReference type="ChEBI" id="CHEBI:57453"/>
    </ligand>
</feature>
<feature type="binding site" evidence="1">
    <location>
        <begin position="121"/>
        <end position="123"/>
    </location>
    <ligand>
        <name>(6S)-5,6,7,8-tetrahydrofolate</name>
        <dbReference type="ChEBI" id="CHEBI:57453"/>
    </ligand>
</feature>
<feature type="binding site" evidence="1">
    <location>
        <begin position="349"/>
        <end position="351"/>
    </location>
    <ligand>
        <name>(6S)-5,6,7,8-tetrahydrofolate</name>
        <dbReference type="ChEBI" id="CHEBI:57453"/>
    </ligand>
</feature>
<feature type="site" description="Plays an important role in substrate specificity" evidence="1">
    <location>
        <position position="225"/>
    </location>
</feature>
<feature type="modified residue" description="N6-(pyridoxal phosphate)lysine" evidence="1">
    <location>
        <position position="226"/>
    </location>
</feature>
<keyword id="KW-0028">Amino-acid biosynthesis</keyword>
<keyword id="KW-0963">Cytoplasm</keyword>
<keyword id="KW-0554">One-carbon metabolism</keyword>
<keyword id="KW-0663">Pyridoxal phosphate</keyword>
<keyword id="KW-0808">Transferase</keyword>
<dbReference type="EC" id="2.1.2.1" evidence="1"/>
<dbReference type="EMBL" id="AL596173">
    <property type="protein sequence ID" value="CAC97909.1"/>
    <property type="molecule type" value="Genomic_DNA"/>
</dbReference>
<dbReference type="PIR" id="AE1767">
    <property type="entry name" value="AE1767"/>
</dbReference>
<dbReference type="RefSeq" id="WP_010991329.1">
    <property type="nucleotide sequence ID" value="NC_003212.1"/>
</dbReference>
<dbReference type="SMR" id="Q927V4"/>
<dbReference type="STRING" id="272626.gene:17567063"/>
<dbReference type="GeneID" id="93235947"/>
<dbReference type="KEGG" id="lin:glyA"/>
<dbReference type="eggNOG" id="COG0112">
    <property type="taxonomic scope" value="Bacteria"/>
</dbReference>
<dbReference type="HOGENOM" id="CLU_022477_2_1_9"/>
<dbReference type="OrthoDB" id="9803846at2"/>
<dbReference type="UniPathway" id="UPA00193"/>
<dbReference type="UniPathway" id="UPA00288">
    <property type="reaction ID" value="UER01023"/>
</dbReference>
<dbReference type="Proteomes" id="UP000002513">
    <property type="component" value="Chromosome"/>
</dbReference>
<dbReference type="GO" id="GO:0005829">
    <property type="term" value="C:cytosol"/>
    <property type="evidence" value="ECO:0007669"/>
    <property type="project" value="TreeGrafter"/>
</dbReference>
<dbReference type="GO" id="GO:0004372">
    <property type="term" value="F:glycine hydroxymethyltransferase activity"/>
    <property type="evidence" value="ECO:0007669"/>
    <property type="project" value="UniProtKB-UniRule"/>
</dbReference>
<dbReference type="GO" id="GO:0030170">
    <property type="term" value="F:pyridoxal phosphate binding"/>
    <property type="evidence" value="ECO:0007669"/>
    <property type="project" value="UniProtKB-UniRule"/>
</dbReference>
<dbReference type="GO" id="GO:0019264">
    <property type="term" value="P:glycine biosynthetic process from serine"/>
    <property type="evidence" value="ECO:0007669"/>
    <property type="project" value="UniProtKB-UniRule"/>
</dbReference>
<dbReference type="GO" id="GO:0035999">
    <property type="term" value="P:tetrahydrofolate interconversion"/>
    <property type="evidence" value="ECO:0007669"/>
    <property type="project" value="UniProtKB-UniRule"/>
</dbReference>
<dbReference type="CDD" id="cd00378">
    <property type="entry name" value="SHMT"/>
    <property type="match status" value="1"/>
</dbReference>
<dbReference type="FunFam" id="3.40.640.10:FF:000001">
    <property type="entry name" value="Serine hydroxymethyltransferase"/>
    <property type="match status" value="1"/>
</dbReference>
<dbReference type="Gene3D" id="3.90.1150.10">
    <property type="entry name" value="Aspartate Aminotransferase, domain 1"/>
    <property type="match status" value="1"/>
</dbReference>
<dbReference type="Gene3D" id="3.40.640.10">
    <property type="entry name" value="Type I PLP-dependent aspartate aminotransferase-like (Major domain)"/>
    <property type="match status" value="1"/>
</dbReference>
<dbReference type="HAMAP" id="MF_00051">
    <property type="entry name" value="SHMT"/>
    <property type="match status" value="1"/>
</dbReference>
<dbReference type="InterPro" id="IPR015424">
    <property type="entry name" value="PyrdxlP-dep_Trfase"/>
</dbReference>
<dbReference type="InterPro" id="IPR015421">
    <property type="entry name" value="PyrdxlP-dep_Trfase_major"/>
</dbReference>
<dbReference type="InterPro" id="IPR015422">
    <property type="entry name" value="PyrdxlP-dep_Trfase_small"/>
</dbReference>
<dbReference type="InterPro" id="IPR001085">
    <property type="entry name" value="Ser_HO-MeTrfase"/>
</dbReference>
<dbReference type="InterPro" id="IPR049943">
    <property type="entry name" value="Ser_HO-MeTrfase-like"/>
</dbReference>
<dbReference type="InterPro" id="IPR019798">
    <property type="entry name" value="Ser_HO-MeTrfase_PLP_BS"/>
</dbReference>
<dbReference type="InterPro" id="IPR039429">
    <property type="entry name" value="SHMT-like_dom"/>
</dbReference>
<dbReference type="NCBIfam" id="NF000586">
    <property type="entry name" value="PRK00011.1"/>
    <property type="match status" value="1"/>
</dbReference>
<dbReference type="PANTHER" id="PTHR11680">
    <property type="entry name" value="SERINE HYDROXYMETHYLTRANSFERASE"/>
    <property type="match status" value="1"/>
</dbReference>
<dbReference type="PANTHER" id="PTHR11680:SF35">
    <property type="entry name" value="SERINE HYDROXYMETHYLTRANSFERASE 1"/>
    <property type="match status" value="1"/>
</dbReference>
<dbReference type="Pfam" id="PF00464">
    <property type="entry name" value="SHMT"/>
    <property type="match status" value="1"/>
</dbReference>
<dbReference type="PIRSF" id="PIRSF000412">
    <property type="entry name" value="SHMT"/>
    <property type="match status" value="1"/>
</dbReference>
<dbReference type="SUPFAM" id="SSF53383">
    <property type="entry name" value="PLP-dependent transferases"/>
    <property type="match status" value="1"/>
</dbReference>
<dbReference type="PROSITE" id="PS00096">
    <property type="entry name" value="SHMT"/>
    <property type="match status" value="1"/>
</dbReference>
<reference key="1">
    <citation type="journal article" date="2001" name="Science">
        <title>Comparative genomics of Listeria species.</title>
        <authorList>
            <person name="Glaser P."/>
            <person name="Frangeul L."/>
            <person name="Buchrieser C."/>
            <person name="Rusniok C."/>
            <person name="Amend A."/>
            <person name="Baquero F."/>
            <person name="Berche P."/>
            <person name="Bloecker H."/>
            <person name="Brandt P."/>
            <person name="Chakraborty T."/>
            <person name="Charbit A."/>
            <person name="Chetouani F."/>
            <person name="Couve E."/>
            <person name="de Daruvar A."/>
            <person name="Dehoux P."/>
            <person name="Domann E."/>
            <person name="Dominguez-Bernal G."/>
            <person name="Duchaud E."/>
            <person name="Durant L."/>
            <person name="Dussurget O."/>
            <person name="Entian K.-D."/>
            <person name="Fsihi H."/>
            <person name="Garcia-del Portillo F."/>
            <person name="Garrido P."/>
            <person name="Gautier L."/>
            <person name="Goebel W."/>
            <person name="Gomez-Lopez N."/>
            <person name="Hain T."/>
            <person name="Hauf J."/>
            <person name="Jackson D."/>
            <person name="Jones L.-M."/>
            <person name="Kaerst U."/>
            <person name="Kreft J."/>
            <person name="Kuhn M."/>
            <person name="Kunst F."/>
            <person name="Kurapkat G."/>
            <person name="Madueno E."/>
            <person name="Maitournam A."/>
            <person name="Mata Vicente J."/>
            <person name="Ng E."/>
            <person name="Nedjari H."/>
            <person name="Nordsiek G."/>
            <person name="Novella S."/>
            <person name="de Pablos B."/>
            <person name="Perez-Diaz J.-C."/>
            <person name="Purcell R."/>
            <person name="Remmel B."/>
            <person name="Rose M."/>
            <person name="Schlueter T."/>
            <person name="Simoes N."/>
            <person name="Tierrez A."/>
            <person name="Vazquez-Boland J.-A."/>
            <person name="Voss H."/>
            <person name="Wehland J."/>
            <person name="Cossart P."/>
        </authorList>
    </citation>
    <scope>NUCLEOTIDE SEQUENCE [LARGE SCALE GENOMIC DNA]</scope>
    <source>
        <strain>ATCC BAA-680 / CLIP 11262</strain>
    </source>
</reference>
<sequence length="413" mass="45120">MVYLQKQDKEVFDAIKLELGRQRANIELIASENFVSEQVMEAMGSVLTNKYAEGYPGKRYYGGCEFVDIVEDLARDRAKKLFGAEYANVQPHSGAQANMAVYHTVLEPGDTVLGMNLSHGGHLTHGSPVNFSGVLYNFVEYGVREDTKEIDYEIVREAALKHKPKMIVAGASAYPRKIDFAKFREIADEVGAYLMVDMAHIAGLVAAGLHQNPVPYADFTTTTTHKTLRGPRGGMILAKAEWEQKLNKSIFPGIQGGPLMHVIAAKAVAFGEALQPEFTAYCEQIIRNSKKLAETLQANDVAVLTGGSDNHLLLIDLKPLGLTGKAAEKVLDEVGITVNKNTIPFETESPFVTSGIRVGVAAVTTRGFDEVAIEKVGVLISEVLHNLENEEVLADVKARVANLTNEYPLYPSL</sequence>
<proteinExistence type="inferred from homology"/>
<accession>Q927V4</accession>
<protein>
    <recommendedName>
        <fullName evidence="1">Serine hydroxymethyltransferase</fullName>
        <shortName evidence="1">SHMT</shortName>
        <shortName evidence="1">Serine methylase</shortName>
        <ecNumber evidence="1">2.1.2.1</ecNumber>
    </recommendedName>
</protein>
<gene>
    <name evidence="1" type="primary">glyA</name>
    <name type="ordered locus">lin2683</name>
</gene>
<comment type="function">
    <text evidence="1">Catalyzes the reversible interconversion of serine and glycine with tetrahydrofolate (THF) serving as the one-carbon carrier. This reaction serves as the major source of one-carbon groups required for the biosynthesis of purines, thymidylate, methionine, and other important biomolecules. Also exhibits THF-independent aldolase activity toward beta-hydroxyamino acids, producing glycine and aldehydes, via a retro-aldol mechanism.</text>
</comment>
<comment type="catalytic activity">
    <reaction evidence="1">
        <text>(6R)-5,10-methylene-5,6,7,8-tetrahydrofolate + glycine + H2O = (6S)-5,6,7,8-tetrahydrofolate + L-serine</text>
        <dbReference type="Rhea" id="RHEA:15481"/>
        <dbReference type="ChEBI" id="CHEBI:15377"/>
        <dbReference type="ChEBI" id="CHEBI:15636"/>
        <dbReference type="ChEBI" id="CHEBI:33384"/>
        <dbReference type="ChEBI" id="CHEBI:57305"/>
        <dbReference type="ChEBI" id="CHEBI:57453"/>
        <dbReference type="EC" id="2.1.2.1"/>
    </reaction>
</comment>
<comment type="cofactor">
    <cofactor evidence="1">
        <name>pyridoxal 5'-phosphate</name>
        <dbReference type="ChEBI" id="CHEBI:597326"/>
    </cofactor>
</comment>
<comment type="pathway">
    <text evidence="1">One-carbon metabolism; tetrahydrofolate interconversion.</text>
</comment>
<comment type="pathway">
    <text evidence="1">Amino-acid biosynthesis; glycine biosynthesis; glycine from L-serine: step 1/1.</text>
</comment>
<comment type="subunit">
    <text evidence="1">Homodimer.</text>
</comment>
<comment type="subcellular location">
    <subcellularLocation>
        <location evidence="1">Cytoplasm</location>
    </subcellularLocation>
</comment>
<comment type="similarity">
    <text evidence="1">Belongs to the SHMT family.</text>
</comment>
<organism>
    <name type="scientific">Listeria innocua serovar 6a (strain ATCC BAA-680 / CLIP 11262)</name>
    <dbReference type="NCBI Taxonomy" id="272626"/>
    <lineage>
        <taxon>Bacteria</taxon>
        <taxon>Bacillati</taxon>
        <taxon>Bacillota</taxon>
        <taxon>Bacilli</taxon>
        <taxon>Bacillales</taxon>
        <taxon>Listeriaceae</taxon>
        <taxon>Listeria</taxon>
    </lineage>
</organism>
<name>GLYA_LISIN</name>
<evidence type="ECO:0000255" key="1">
    <source>
        <dbReference type="HAMAP-Rule" id="MF_00051"/>
    </source>
</evidence>